<sequence length="19" mass="1975">GFFDLAKKVVGGIRNALGI</sequence>
<protein>
    <recommendedName>
        <fullName>Uperin-2.3</fullName>
    </recommendedName>
</protein>
<accession>P82029</accession>
<name>UPE23_UPEIN</name>
<proteinExistence type="evidence at protein level"/>
<reference key="1">
    <citation type="journal article" date="1996" name="Aust. J. Chem.">
        <title>Novel uperin peptides from the dorsal glands of the australian floodplain toadlet Uperoleia inundata.</title>
        <authorList>
            <person name="Bradford A.M."/>
            <person name="Raftery M.J."/>
            <person name="Bowie J.H."/>
            <person name="Tyler M.J."/>
            <person name="Wallace J.C."/>
            <person name="Adams G.W."/>
            <person name="Severini C."/>
        </authorList>
    </citation>
    <scope>PROTEIN SEQUENCE</scope>
    <scope>MASS SPECTROMETRY</scope>
    <source>
        <tissue>Skin secretion</tissue>
    </source>
</reference>
<comment type="function">
    <text>Shows a medium antibacterial activity against B.cereus, L.mesenteriodes and S.uberis.</text>
</comment>
<comment type="subcellular location">
    <subcellularLocation>
        <location>Secreted</location>
    </subcellularLocation>
</comment>
<comment type="tissue specificity">
    <text>Expressed by the skin dorsal glands.</text>
</comment>
<comment type="mass spectrometry" mass="1974.0" method="FAB" evidence="1"/>
<keyword id="KW-0878">Amphibian defense peptide</keyword>
<keyword id="KW-0044">Antibiotic</keyword>
<keyword id="KW-0929">Antimicrobial</keyword>
<keyword id="KW-0903">Direct protein sequencing</keyword>
<keyword id="KW-0964">Secreted</keyword>
<evidence type="ECO:0000269" key="1">
    <source ref="1"/>
</evidence>
<dbReference type="TCDB" id="1.C.76.1.5">
    <property type="family name" value="the pore-forming maculatin peptide (maculatin) family"/>
</dbReference>
<dbReference type="GO" id="GO:0005576">
    <property type="term" value="C:extracellular region"/>
    <property type="evidence" value="ECO:0007669"/>
    <property type="project" value="UniProtKB-SubCell"/>
</dbReference>
<dbReference type="GO" id="GO:0042742">
    <property type="term" value="P:defense response to bacterium"/>
    <property type="evidence" value="ECO:0007669"/>
    <property type="project" value="UniProtKB-KW"/>
</dbReference>
<dbReference type="InterPro" id="IPR013157">
    <property type="entry name" value="Aurein_antimicrobial_peptide"/>
</dbReference>
<dbReference type="Pfam" id="PF08256">
    <property type="entry name" value="Antimicrobial20"/>
    <property type="match status" value="1"/>
</dbReference>
<organism>
    <name type="scientific">Uperoleia inundata</name>
    <name type="common">Floodplain toadlet</name>
    <dbReference type="NCBI Taxonomy" id="104953"/>
    <lineage>
        <taxon>Eukaryota</taxon>
        <taxon>Metazoa</taxon>
        <taxon>Chordata</taxon>
        <taxon>Craniata</taxon>
        <taxon>Vertebrata</taxon>
        <taxon>Euteleostomi</taxon>
        <taxon>Amphibia</taxon>
        <taxon>Batrachia</taxon>
        <taxon>Anura</taxon>
        <taxon>Neobatrachia</taxon>
        <taxon>Myobatrachoidea</taxon>
        <taxon>Myobatrachidae</taxon>
        <taxon>Myobatrachinae</taxon>
        <taxon>Uperoleia</taxon>
    </lineage>
</organism>
<feature type="peptide" id="PRO_0000043848" description="Uperin-2.3">
    <location>
        <begin position="1"/>
        <end position="19"/>
    </location>
</feature>